<name>MNMA_PSEAE</name>
<reference key="1">
    <citation type="journal article" date="2000" name="Nature">
        <title>Complete genome sequence of Pseudomonas aeruginosa PAO1, an opportunistic pathogen.</title>
        <authorList>
            <person name="Stover C.K."/>
            <person name="Pham X.-Q.T."/>
            <person name="Erwin A.L."/>
            <person name="Mizoguchi S.D."/>
            <person name="Warrener P."/>
            <person name="Hickey M.J."/>
            <person name="Brinkman F.S.L."/>
            <person name="Hufnagle W.O."/>
            <person name="Kowalik D.J."/>
            <person name="Lagrou M."/>
            <person name="Garber R.L."/>
            <person name="Goltry L."/>
            <person name="Tolentino E."/>
            <person name="Westbrock-Wadman S."/>
            <person name="Yuan Y."/>
            <person name="Brody L.L."/>
            <person name="Coulter S.N."/>
            <person name="Folger K.R."/>
            <person name="Kas A."/>
            <person name="Larbig K."/>
            <person name="Lim R.M."/>
            <person name="Smith K.A."/>
            <person name="Spencer D.H."/>
            <person name="Wong G.K.-S."/>
            <person name="Wu Z."/>
            <person name="Paulsen I.T."/>
            <person name="Reizer J."/>
            <person name="Saier M.H. Jr."/>
            <person name="Hancock R.E.W."/>
            <person name="Lory S."/>
            <person name="Olson M.V."/>
        </authorList>
    </citation>
    <scope>NUCLEOTIDE SEQUENCE [LARGE SCALE GENOMIC DNA]</scope>
    <source>
        <strain>ATCC 15692 / DSM 22644 / CIP 104116 / JCM 14847 / LMG 12228 / 1C / PRS 101 / PAO1</strain>
    </source>
</reference>
<protein>
    <recommendedName>
        <fullName evidence="1">tRNA-specific 2-thiouridylase MnmA</fullName>
        <ecNumber evidence="1">2.8.1.13</ecNumber>
    </recommendedName>
</protein>
<comment type="function">
    <text evidence="1">Catalyzes the 2-thiolation of uridine at the wobble position (U34) of tRNA, leading to the formation of s(2)U34.</text>
</comment>
<comment type="catalytic activity">
    <reaction evidence="1">
        <text>S-sulfanyl-L-cysteinyl-[protein] + uridine(34) in tRNA + AH2 + ATP = 2-thiouridine(34) in tRNA + L-cysteinyl-[protein] + A + AMP + diphosphate + H(+)</text>
        <dbReference type="Rhea" id="RHEA:47032"/>
        <dbReference type="Rhea" id="RHEA-COMP:10131"/>
        <dbReference type="Rhea" id="RHEA-COMP:11726"/>
        <dbReference type="Rhea" id="RHEA-COMP:11727"/>
        <dbReference type="Rhea" id="RHEA-COMP:11728"/>
        <dbReference type="ChEBI" id="CHEBI:13193"/>
        <dbReference type="ChEBI" id="CHEBI:15378"/>
        <dbReference type="ChEBI" id="CHEBI:17499"/>
        <dbReference type="ChEBI" id="CHEBI:29950"/>
        <dbReference type="ChEBI" id="CHEBI:30616"/>
        <dbReference type="ChEBI" id="CHEBI:33019"/>
        <dbReference type="ChEBI" id="CHEBI:61963"/>
        <dbReference type="ChEBI" id="CHEBI:65315"/>
        <dbReference type="ChEBI" id="CHEBI:87170"/>
        <dbReference type="ChEBI" id="CHEBI:456215"/>
        <dbReference type="EC" id="2.8.1.13"/>
    </reaction>
</comment>
<comment type="subcellular location">
    <subcellularLocation>
        <location evidence="1">Cytoplasm</location>
    </subcellularLocation>
</comment>
<comment type="similarity">
    <text evidence="1">Belongs to the MnmA/TRMU family.</text>
</comment>
<keyword id="KW-0067">ATP-binding</keyword>
<keyword id="KW-0963">Cytoplasm</keyword>
<keyword id="KW-1015">Disulfide bond</keyword>
<keyword id="KW-0547">Nucleotide-binding</keyword>
<keyword id="KW-1185">Reference proteome</keyword>
<keyword id="KW-0694">RNA-binding</keyword>
<keyword id="KW-0808">Transferase</keyword>
<keyword id="KW-0819">tRNA processing</keyword>
<keyword id="KW-0820">tRNA-binding</keyword>
<gene>
    <name evidence="1" type="primary">mnmA</name>
    <name type="synonym">trmU</name>
    <name type="ordered locus">PA2626</name>
</gene>
<sequence>MSESAPTPRRERVIVGMSGGVDSSVSALLLLQQGYQVEGLFMKNWDEDDGTEYCTAREDLADAQAVCDRIGIKLHTANFAAEYWDNVFEHFLAEYKAGRTPNPDILCNREIKFKAFLDYALMLGADLIATGHYVRRRDRDGRTELLKGLDPNKDQSYFLHAVGGEQIARSLFPVGELEKPEVRAIAEKHGLATAKKKDSTGICFIGERRFTDFLKQYLPAQPGDIETTEGKVIGRHSGLMYHTIGQRQGLGIGGLKEAGDDPWYVLGKDLQRNVLLVGQGNDHPLLFSRALLASRIYWVNPVELERPRRLRAKVRYRQSDQDCVLEKTAEGYRAVFDEPQRAVTPGQSVVFYDGDVCLGGGVIETAEAWDFGGRP</sequence>
<feature type="chain" id="PRO_0000121662" description="tRNA-specific 2-thiouridylase MnmA">
    <location>
        <begin position="1"/>
        <end position="375"/>
    </location>
</feature>
<feature type="region of interest" description="Interaction with target base in tRNA" evidence="1">
    <location>
        <begin position="102"/>
        <end position="104"/>
    </location>
</feature>
<feature type="region of interest" description="Interaction with tRNA" evidence="1">
    <location>
        <begin position="153"/>
        <end position="155"/>
    </location>
</feature>
<feature type="region of interest" description="Interaction with tRNA" evidence="1">
    <location>
        <begin position="315"/>
        <end position="316"/>
    </location>
</feature>
<feature type="active site" description="Nucleophile" evidence="1">
    <location>
        <position position="107"/>
    </location>
</feature>
<feature type="active site" description="Cysteine persulfide intermediate" evidence="1">
    <location>
        <position position="203"/>
    </location>
</feature>
<feature type="binding site" evidence="1">
    <location>
        <begin position="16"/>
        <end position="23"/>
    </location>
    <ligand>
        <name>ATP</name>
        <dbReference type="ChEBI" id="CHEBI:30616"/>
    </ligand>
</feature>
<feature type="binding site" evidence="1">
    <location>
        <position position="42"/>
    </location>
    <ligand>
        <name>ATP</name>
        <dbReference type="ChEBI" id="CHEBI:30616"/>
    </ligand>
</feature>
<feature type="binding site" evidence="1">
    <location>
        <position position="131"/>
    </location>
    <ligand>
        <name>ATP</name>
        <dbReference type="ChEBI" id="CHEBI:30616"/>
    </ligand>
</feature>
<feature type="site" description="Interaction with tRNA" evidence="1">
    <location>
        <position position="132"/>
    </location>
</feature>
<feature type="site" description="Interaction with tRNA" evidence="1">
    <location>
        <position position="347"/>
    </location>
</feature>
<feature type="disulfide bond" description="Alternate" evidence="1">
    <location>
        <begin position="107"/>
        <end position="203"/>
    </location>
</feature>
<proteinExistence type="inferred from homology"/>
<dbReference type="EC" id="2.8.1.13" evidence="1"/>
<dbReference type="EMBL" id="AE004091">
    <property type="protein sequence ID" value="AAG06014.1"/>
    <property type="molecule type" value="Genomic_DNA"/>
</dbReference>
<dbReference type="PIR" id="C83317">
    <property type="entry name" value="C83317"/>
</dbReference>
<dbReference type="RefSeq" id="NP_251316.1">
    <property type="nucleotide sequence ID" value="NC_002516.2"/>
</dbReference>
<dbReference type="RefSeq" id="WP_003131114.1">
    <property type="nucleotide sequence ID" value="NZ_QZGE01000008.1"/>
</dbReference>
<dbReference type="SMR" id="Q9I0L2"/>
<dbReference type="FunCoup" id="Q9I0L2">
    <property type="interactions" value="732"/>
</dbReference>
<dbReference type="STRING" id="208964.PA2626"/>
<dbReference type="PaxDb" id="208964-PA2626"/>
<dbReference type="DNASU" id="882332"/>
<dbReference type="GeneID" id="882332"/>
<dbReference type="KEGG" id="pae:PA2626"/>
<dbReference type="PATRIC" id="fig|208964.12.peg.2748"/>
<dbReference type="PseudoCAP" id="PA2626"/>
<dbReference type="HOGENOM" id="CLU_035188_1_0_6"/>
<dbReference type="InParanoid" id="Q9I0L2"/>
<dbReference type="OrthoDB" id="9800696at2"/>
<dbReference type="PhylomeDB" id="Q9I0L2"/>
<dbReference type="BioCyc" id="PAER208964:G1FZ6-2666-MONOMER"/>
<dbReference type="Proteomes" id="UP000002438">
    <property type="component" value="Chromosome"/>
</dbReference>
<dbReference type="GO" id="GO:0005737">
    <property type="term" value="C:cytoplasm"/>
    <property type="evidence" value="ECO:0007669"/>
    <property type="project" value="UniProtKB-SubCell"/>
</dbReference>
<dbReference type="GO" id="GO:0005524">
    <property type="term" value="F:ATP binding"/>
    <property type="evidence" value="ECO:0007669"/>
    <property type="project" value="UniProtKB-KW"/>
</dbReference>
<dbReference type="GO" id="GO:0000049">
    <property type="term" value="F:tRNA binding"/>
    <property type="evidence" value="ECO:0007669"/>
    <property type="project" value="UniProtKB-KW"/>
</dbReference>
<dbReference type="GO" id="GO:0103016">
    <property type="term" value="F:tRNA-uridine 2-sulfurtransferase activity"/>
    <property type="evidence" value="ECO:0007669"/>
    <property type="project" value="UniProtKB-EC"/>
</dbReference>
<dbReference type="GO" id="GO:0002143">
    <property type="term" value="P:tRNA wobble position uridine thiolation"/>
    <property type="evidence" value="ECO:0000318"/>
    <property type="project" value="GO_Central"/>
</dbReference>
<dbReference type="CDD" id="cd01998">
    <property type="entry name" value="MnmA_TRMU-like"/>
    <property type="match status" value="1"/>
</dbReference>
<dbReference type="FunFam" id="2.30.30.280:FF:000001">
    <property type="entry name" value="tRNA-specific 2-thiouridylase MnmA"/>
    <property type="match status" value="1"/>
</dbReference>
<dbReference type="FunFam" id="2.40.30.10:FF:000023">
    <property type="entry name" value="tRNA-specific 2-thiouridylase MnmA"/>
    <property type="match status" value="1"/>
</dbReference>
<dbReference type="FunFam" id="3.40.50.620:FF:000004">
    <property type="entry name" value="tRNA-specific 2-thiouridylase MnmA"/>
    <property type="match status" value="1"/>
</dbReference>
<dbReference type="Gene3D" id="2.30.30.280">
    <property type="entry name" value="Adenine nucleotide alpha hydrolases-like domains"/>
    <property type="match status" value="1"/>
</dbReference>
<dbReference type="Gene3D" id="3.40.50.620">
    <property type="entry name" value="HUPs"/>
    <property type="match status" value="1"/>
</dbReference>
<dbReference type="Gene3D" id="2.40.30.10">
    <property type="entry name" value="Translation factors"/>
    <property type="match status" value="1"/>
</dbReference>
<dbReference type="HAMAP" id="MF_00144">
    <property type="entry name" value="tRNA_thiouridyl_MnmA"/>
    <property type="match status" value="1"/>
</dbReference>
<dbReference type="InterPro" id="IPR004506">
    <property type="entry name" value="MnmA-like"/>
</dbReference>
<dbReference type="InterPro" id="IPR046885">
    <property type="entry name" value="MnmA-like_C"/>
</dbReference>
<dbReference type="InterPro" id="IPR046884">
    <property type="entry name" value="MnmA-like_central"/>
</dbReference>
<dbReference type="InterPro" id="IPR023382">
    <property type="entry name" value="MnmA-like_central_sf"/>
</dbReference>
<dbReference type="InterPro" id="IPR014729">
    <property type="entry name" value="Rossmann-like_a/b/a_fold"/>
</dbReference>
<dbReference type="NCBIfam" id="NF001138">
    <property type="entry name" value="PRK00143.1"/>
    <property type="match status" value="1"/>
</dbReference>
<dbReference type="NCBIfam" id="TIGR00420">
    <property type="entry name" value="trmU"/>
    <property type="match status" value="1"/>
</dbReference>
<dbReference type="PANTHER" id="PTHR11933:SF5">
    <property type="entry name" value="MITOCHONDRIAL TRNA-SPECIFIC 2-THIOURIDYLASE 1"/>
    <property type="match status" value="1"/>
</dbReference>
<dbReference type="PANTHER" id="PTHR11933">
    <property type="entry name" value="TRNA 5-METHYLAMINOMETHYL-2-THIOURIDYLATE -METHYLTRANSFERASE"/>
    <property type="match status" value="1"/>
</dbReference>
<dbReference type="Pfam" id="PF03054">
    <property type="entry name" value="tRNA_Me_trans"/>
    <property type="match status" value="1"/>
</dbReference>
<dbReference type="Pfam" id="PF20258">
    <property type="entry name" value="tRNA_Me_trans_C"/>
    <property type="match status" value="1"/>
</dbReference>
<dbReference type="Pfam" id="PF20259">
    <property type="entry name" value="tRNA_Me_trans_M"/>
    <property type="match status" value="1"/>
</dbReference>
<dbReference type="SUPFAM" id="SSF52402">
    <property type="entry name" value="Adenine nucleotide alpha hydrolases-like"/>
    <property type="match status" value="1"/>
</dbReference>
<organism>
    <name type="scientific">Pseudomonas aeruginosa (strain ATCC 15692 / DSM 22644 / CIP 104116 / JCM 14847 / LMG 12228 / 1C / PRS 101 / PAO1)</name>
    <dbReference type="NCBI Taxonomy" id="208964"/>
    <lineage>
        <taxon>Bacteria</taxon>
        <taxon>Pseudomonadati</taxon>
        <taxon>Pseudomonadota</taxon>
        <taxon>Gammaproteobacteria</taxon>
        <taxon>Pseudomonadales</taxon>
        <taxon>Pseudomonadaceae</taxon>
        <taxon>Pseudomonas</taxon>
    </lineage>
</organism>
<accession>Q9I0L2</accession>
<evidence type="ECO:0000255" key="1">
    <source>
        <dbReference type="HAMAP-Rule" id="MF_00144"/>
    </source>
</evidence>